<sequence>MKYQQLENLEAGWKWMYLFNKHRMGESITCYIDSSEEQQMVNVFLKLEHEPVHVLEWIQKHMNPDLQNKLKQAIRAKRKRHFNAEQEHTRKKSIDLDYRVWEKLSLRAQELDSTLSDTIEYLLSEASRTEKASQTVSSLKADLHELLK</sequence>
<keyword id="KW-0131">Cell cycle</keyword>
<keyword id="KW-0132">Cell division</keyword>
<keyword id="KW-0963">Cytoplasm</keyword>
<keyword id="KW-0238">DNA-binding</keyword>
<organism>
    <name type="scientific">Aliivibrio salmonicida (strain LFI1238)</name>
    <name type="common">Vibrio salmonicida (strain LFI1238)</name>
    <dbReference type="NCBI Taxonomy" id="316275"/>
    <lineage>
        <taxon>Bacteria</taxon>
        <taxon>Pseudomonadati</taxon>
        <taxon>Pseudomonadota</taxon>
        <taxon>Gammaproteobacteria</taxon>
        <taxon>Vibrionales</taxon>
        <taxon>Vibrionaceae</taxon>
        <taxon>Aliivibrio</taxon>
    </lineage>
</organism>
<reference key="1">
    <citation type="journal article" date="2008" name="BMC Genomics">
        <title>The genome sequence of the fish pathogen Aliivibrio salmonicida strain LFI1238 shows extensive evidence of gene decay.</title>
        <authorList>
            <person name="Hjerde E."/>
            <person name="Lorentzen M.S."/>
            <person name="Holden M.T."/>
            <person name="Seeger K."/>
            <person name="Paulsen S."/>
            <person name="Bason N."/>
            <person name="Churcher C."/>
            <person name="Harris D."/>
            <person name="Norbertczak H."/>
            <person name="Quail M.A."/>
            <person name="Sanders S."/>
            <person name="Thurston S."/>
            <person name="Parkhill J."/>
            <person name="Willassen N.P."/>
            <person name="Thomson N.R."/>
        </authorList>
    </citation>
    <scope>NUCLEOTIDE SEQUENCE [LARGE SCALE GENOMIC DNA]</scope>
    <source>
        <strain>LFI1238</strain>
    </source>
</reference>
<gene>
    <name evidence="1" type="primary">matP</name>
    <name type="ordered locus">VSAL_I1558</name>
</gene>
<proteinExistence type="inferred from homology"/>
<dbReference type="EMBL" id="FM178379">
    <property type="protein sequence ID" value="CAQ79243.1"/>
    <property type="molecule type" value="Genomic_DNA"/>
</dbReference>
<dbReference type="RefSeq" id="WP_012550208.1">
    <property type="nucleotide sequence ID" value="NC_011312.1"/>
</dbReference>
<dbReference type="SMR" id="B6ELS5"/>
<dbReference type="KEGG" id="vsa:VSAL_I1558"/>
<dbReference type="eggNOG" id="COG3120">
    <property type="taxonomic scope" value="Bacteria"/>
</dbReference>
<dbReference type="HOGENOM" id="CLU_142157_0_0_6"/>
<dbReference type="Proteomes" id="UP000001730">
    <property type="component" value="Chromosome 1"/>
</dbReference>
<dbReference type="GO" id="GO:0005737">
    <property type="term" value="C:cytoplasm"/>
    <property type="evidence" value="ECO:0007669"/>
    <property type="project" value="UniProtKB-SubCell"/>
</dbReference>
<dbReference type="GO" id="GO:0043565">
    <property type="term" value="F:sequence-specific DNA binding"/>
    <property type="evidence" value="ECO:0007669"/>
    <property type="project" value="UniProtKB-UniRule"/>
</dbReference>
<dbReference type="GO" id="GO:0051301">
    <property type="term" value="P:cell division"/>
    <property type="evidence" value="ECO:0007669"/>
    <property type="project" value="UniProtKB-UniRule"/>
</dbReference>
<dbReference type="GO" id="GO:0006355">
    <property type="term" value="P:regulation of DNA-templated transcription"/>
    <property type="evidence" value="ECO:0007669"/>
    <property type="project" value="InterPro"/>
</dbReference>
<dbReference type="Gene3D" id="1.20.1270.380">
    <property type="entry name" value="MatP, N-terminal domain"/>
    <property type="match status" value="1"/>
</dbReference>
<dbReference type="Gene3D" id="1.10.1220.10">
    <property type="entry name" value="Met repressor-like"/>
    <property type="match status" value="1"/>
</dbReference>
<dbReference type="HAMAP" id="MF_01073">
    <property type="entry name" value="MatP"/>
    <property type="match status" value="1"/>
</dbReference>
<dbReference type="InterPro" id="IPR013321">
    <property type="entry name" value="Arc_rbn_hlx_hlx"/>
</dbReference>
<dbReference type="InterPro" id="IPR009390">
    <property type="entry name" value="MatP"/>
</dbReference>
<dbReference type="InterPro" id="IPR035375">
    <property type="entry name" value="MatP_C"/>
</dbReference>
<dbReference type="InterPro" id="IPR035087">
    <property type="entry name" value="MatP_N"/>
</dbReference>
<dbReference type="InterPro" id="IPR038339">
    <property type="entry name" value="MatP_N_sf"/>
</dbReference>
<dbReference type="NCBIfam" id="NF003471">
    <property type="entry name" value="PRK05097.1"/>
    <property type="match status" value="1"/>
</dbReference>
<dbReference type="Pfam" id="PF06303">
    <property type="entry name" value="MatP"/>
    <property type="match status" value="1"/>
</dbReference>
<dbReference type="Pfam" id="PF17414">
    <property type="entry name" value="MatP_C"/>
    <property type="match status" value="1"/>
</dbReference>
<protein>
    <recommendedName>
        <fullName evidence="1">Macrodomain Ter protein</fullName>
    </recommendedName>
</protein>
<comment type="function">
    <text evidence="1">Required for spatial organization of the terminus region of the chromosome (Ter macrodomain) during the cell cycle. Prevents early segregation of duplicated Ter macrodomains during cell division. Binds specifically to matS, which is a 13 bp signature motif repeated within the Ter macrodomain.</text>
</comment>
<comment type="subunit">
    <text evidence="1">Homodimer.</text>
</comment>
<comment type="subcellular location">
    <subcellularLocation>
        <location evidence="1">Cytoplasm</location>
    </subcellularLocation>
</comment>
<comment type="similarity">
    <text evidence="1">Belongs to the MatP family.</text>
</comment>
<feature type="chain" id="PRO_1000136661" description="Macrodomain Ter protein">
    <location>
        <begin position="1"/>
        <end position="148"/>
    </location>
</feature>
<accession>B6ELS5</accession>
<evidence type="ECO:0000255" key="1">
    <source>
        <dbReference type="HAMAP-Rule" id="MF_01073"/>
    </source>
</evidence>
<name>MATP_ALISL</name>